<reference key="1">
    <citation type="journal article" date="1999" name="J. Biol. Chem.">
        <title>Molecular cloning, genomic organization, and functional expression of Na+/H+ exchanger isoform 5 (NHE5) from human brain.</title>
        <authorList>
            <person name="Baird N.R."/>
            <person name="Orlowski J."/>
            <person name="Szabo E.Z."/>
            <person name="Zaun H.C."/>
            <person name="Schultheis P.J."/>
            <person name="Menon A.G."/>
            <person name="Shull G.E."/>
        </authorList>
    </citation>
    <scope>NUCLEOTIDE SEQUENCE [MRNA]</scope>
    <scope>TISSUE SPECIFICITY</scope>
    <scope>FUNCTION</scope>
    <scope>TRANSPORTER ACTIVITY</scope>
    <source>
        <tissue>Brain</tissue>
    </source>
</reference>
<reference key="2">
    <citation type="submission" date="2005-07" db="EMBL/GenBank/DDBJ databases">
        <authorList>
            <person name="Mural R.J."/>
            <person name="Istrail S."/>
            <person name="Sutton G.G."/>
            <person name="Florea L."/>
            <person name="Halpern A.L."/>
            <person name="Mobarry C.M."/>
            <person name="Lippert R."/>
            <person name="Walenz B."/>
            <person name="Shatkay H."/>
            <person name="Dew I."/>
            <person name="Miller J.R."/>
            <person name="Flanigan M.J."/>
            <person name="Edwards N.J."/>
            <person name="Bolanos R."/>
            <person name="Fasulo D."/>
            <person name="Halldorsson B.V."/>
            <person name="Hannenhalli S."/>
            <person name="Turner R."/>
            <person name="Yooseph S."/>
            <person name="Lu F."/>
            <person name="Nusskern D.R."/>
            <person name="Shue B.C."/>
            <person name="Zheng X.H."/>
            <person name="Zhong F."/>
            <person name="Delcher A.L."/>
            <person name="Huson D.H."/>
            <person name="Kravitz S.A."/>
            <person name="Mouchard L."/>
            <person name="Reinert K."/>
            <person name="Remington K.A."/>
            <person name="Clark A.G."/>
            <person name="Waterman M.S."/>
            <person name="Eichler E.E."/>
            <person name="Adams M.D."/>
            <person name="Hunkapiller M.W."/>
            <person name="Myers E.W."/>
            <person name="Venter J.C."/>
        </authorList>
    </citation>
    <scope>NUCLEOTIDE SEQUENCE [LARGE SCALE GENOMIC DNA]</scope>
</reference>
<reference key="3">
    <citation type="journal article" date="2004" name="Genome Res.">
        <title>The status, quality, and expansion of the NIH full-length cDNA project: the Mammalian Gene Collection (MGC).</title>
        <authorList>
            <consortium name="The MGC Project Team"/>
        </authorList>
    </citation>
    <scope>NUCLEOTIDE SEQUENCE [LARGE SCALE MRNA]</scope>
</reference>
<reference key="4">
    <citation type="journal article" date="1995" name="Genomics">
        <title>Molecular cloning and physical and genetic mapping of a novel human Na+/H+ exchanger (NHE5/SLC9A5) to chromosome 16q22.1.</title>
        <authorList>
            <person name="Klanke C.A."/>
            <person name="Su Y.R."/>
            <person name="Callen D.F."/>
            <person name="Wang Z."/>
            <person name="Meneton P."/>
            <person name="Baird N."/>
            <person name="Kandasamy R.A."/>
            <person name="Orlowski J."/>
            <person name="Otterud B.E."/>
            <person name="Leppert M."/>
            <person name="Shull G.E."/>
            <person name="Menon A.G."/>
        </authorList>
    </citation>
    <scope>NUCLEOTIDE SEQUENCE [GENOMIC DNA] OF 64-218</scope>
    <scope>TISSUE SPECIFICITY</scope>
</reference>
<reference key="5">
    <citation type="journal article" date="2000" name="J. Biol. Chem.">
        <title>Kinetic and pharmacological properties of human brain Na(+)/H(+) exchanger isoform 5 stably expressed in Chinese hamster ovary cells.</title>
        <authorList>
            <person name="Szabo E.Z."/>
            <person name="Numata M."/>
            <person name="Shull G.E."/>
            <person name="Orlowski J."/>
        </authorList>
    </citation>
    <scope>FUNCTION</scope>
    <scope>TRANSPORTER ACTIVITY</scope>
    <scope>ACTIVITY REGULATION</scope>
</reference>
<reference key="6">
    <citation type="journal article" date="2002" name="J. Biol. Chem.">
        <title>Clathrin-mediated endocytosis and recycling of the neuron-specific Na+/H+ exchanger NHE5 isoform. Regulation by phosphatidylinositol 3'-kinase and the actin cytoskeleton.</title>
        <authorList>
            <person name="Szaszi K."/>
            <person name="Paulsen A."/>
            <person name="Szabo E.Z."/>
            <person name="Numata M."/>
            <person name="Grinstein S."/>
            <person name="Orlowski J."/>
        </authorList>
    </citation>
    <scope>SUBCELLULAR LOCATION</scope>
</reference>
<reference key="7">
    <citation type="journal article" date="2005" name="Proc. Natl. Acad. Sci. U.S.A.">
        <title>beta-Arrestins bind and decrease cell-surface abundance of the Na+/H+ exchanger NHE5 isoform.</title>
        <authorList>
            <person name="Szabo E.Z."/>
            <person name="Numata M."/>
            <person name="Lukashova V."/>
            <person name="Iannuzzi P."/>
            <person name="Orlowski J."/>
        </authorList>
    </citation>
    <scope>INTERACTION WITH ARRB2</scope>
    <scope>SUBCELLULAR LOCATION</scope>
</reference>
<reference key="8">
    <citation type="journal article" date="2009" name="J. Biol. Chem.">
        <title>Secretory Carrier Membrane Protein 2 Regulates Cell-surface Targeting of Brain-enriched Na+/H+ Exchanger NHE5.</title>
        <authorList>
            <person name="Diering G.H."/>
            <person name="Church J."/>
            <person name="Numata M."/>
        </authorList>
    </citation>
    <scope>SUBCELLULAR LOCATION</scope>
    <scope>INTERACTION WITH SCAMP2</scope>
    <scope>FUNCTION</scope>
    <scope>TRANSPORTER ACTIVITY</scope>
</reference>
<reference key="9">
    <citation type="journal article" date="2011" name="Mol. Biol. Cell">
        <title>Regulation of dendritic spine growth through activity-dependent recruitment of the brain-enriched Na+/H+ exchanger NHE5.</title>
        <authorList>
            <person name="Diering G.H."/>
            <person name="Mills F."/>
            <person name="Bamji S.X."/>
            <person name="Numata M."/>
        </authorList>
    </citation>
    <scope>FUNCTION</scope>
    <scope>TISSUE SPECIFICITY</scope>
    <scope>SUBCELLULAR LOCATION</scope>
</reference>
<reference key="10">
    <citation type="journal article" date="2011" name="J. Biol. Chem.">
        <title>CK2 phosphorylation of an acidic Ser/Thr di-isoleucine motif in the Na+/H+ exchanger NHE5 isoform promotes association with beta-arrestin2 and endocytosis.</title>
        <authorList>
            <person name="Lukashova V."/>
            <person name="Szabo E.Z."/>
            <person name="Jinadasa T."/>
            <person name="Mokhov A."/>
            <person name="Litchfield D.W."/>
            <person name="Orlowski J."/>
        </authorList>
    </citation>
    <scope>FUNCTION</scope>
    <scope>SUBCELLULAR LOCATION</scope>
    <scope>INTERACTION WITH ARRB2</scope>
    <scope>PHOSPHORYLATION BY CSNK2A1</scope>
    <scope>MUTAGENESIS OF 697-ILE--LEU-698; SER-702; SER-709; SER-711; SER-712; THR-714 AND 722-ILE--ILE-723</scope>
</reference>
<reference key="11">
    <citation type="journal article" date="2013" name="Mol. Biol. Cell">
        <title>Endosomal acidification by Na+/H+ exchanger NHE5 regulates TrkA cell-surface targeting and NGF-induced PI3K signaling.</title>
        <authorList>
            <person name="Diering G.H."/>
            <person name="Numata Y."/>
            <person name="Fan S."/>
            <person name="Church J."/>
            <person name="Numata M."/>
        </authorList>
    </citation>
    <scope>INTERACTION WITH RACK1</scope>
    <scope>FUNCTION</scope>
    <scope>TRANSPORTER ACTIVITY</scope>
</reference>
<reference key="12">
    <citation type="journal article" date="2014" name="J. Biol. Chem.">
        <title>Activation of AMP-activated protein kinase regulates hippocampal neuronal pH by recruiting Na(+)/H(+) exchanger NHE5 to the cell surface.</title>
        <authorList>
            <person name="Jinadasa T."/>
            <person name="Szabo E.Z."/>
            <person name="Numat M."/>
            <person name="Orlowski J."/>
        </authorList>
    </citation>
    <scope>FUNCTION</scope>
    <scope>PHOSPHORYLATION BY PRKAA2</scope>
    <scope>SUBCELLULAR LOCATION</scope>
</reference>
<protein>
    <recommendedName>
        <fullName>Sodium/hydrogen exchanger 5</fullName>
    </recommendedName>
    <alternativeName>
        <fullName>Na(+)/H(+) exchanger 5</fullName>
        <shortName>NHE-5</shortName>
    </alternativeName>
    <alternativeName>
        <fullName>Solute carrier family 9 member 5</fullName>
    </alternativeName>
</protein>
<accession>Q14940</accession>
<accession>A5PKY7</accession>
<accession>Q9Y626</accession>
<comment type="function">
    <text evidence="4 7 9 10 11 13">Plasma membrane Na(+)/H(+) antiporter. Mediates the electroneutral exchange of intracellular H(+) ions for extracellular Na(+) in 1:1 stoichiometry, thus regulating intracellular pH homeostasis, in particular in neural tissues (PubMed:10692428, PubMed:19276089, PubMed:24936055, PubMed:9933641). Acts as a negative regulator of dendritic spine growth (PubMed:21551074). Plays a role in postsynaptic remodeling and signaling (PubMed:21551074, PubMed:24006492). Can also contribute to organellar pH regulation, with consequences for receptor tyrosine kinase trafficking (PubMed:24936055).</text>
</comment>
<comment type="catalytic activity">
    <reaction evidence="4 7 13">
        <text>Na(+)(in) + H(+)(out) = Na(+)(out) + H(+)(in)</text>
        <dbReference type="Rhea" id="RHEA:29419"/>
        <dbReference type="ChEBI" id="CHEBI:15378"/>
        <dbReference type="ChEBI" id="CHEBI:29101"/>
    </reaction>
    <physiologicalReaction direction="right-to-left" evidence="15">
        <dbReference type="Rhea" id="RHEA:29421"/>
    </physiologicalReaction>
</comment>
<comment type="activity regulation">
    <text evidence="4">ATP-depletion almost completely abolishes SLC9A5 activity. Inhibited by amiloride compounds.</text>
</comment>
<comment type="subunit">
    <text evidence="1 6 7 8 10">Interacts with CHP1 and CHP2 (By similarity). Interacts with ARRB2; facilitates the endocytosis of SLC9A5 from the plasma membrane (PubMed:15699339, PubMed:21296876). Interacts with RACK1; this interaction positively regulates SLC9A5 activity and promotes SLC9A5 localization to focal adhesions (PubMed:24006492). Interacts with SCAMP2; this interaction regulates SLC9A5 cell-surface targeting and SLC9A5 activity (PubMed:19276089).</text>
</comment>
<comment type="subcellular location">
    <subcellularLocation>
        <location evidence="5 6 7 8 9 11">Cell membrane</location>
        <topology evidence="2">Multi-pass membrane protein</topology>
    </subcellularLocation>
    <subcellularLocation>
        <location evidence="5 8">Recycling endosome membrane</location>
        <topology evidence="2">Multi-pass membrane protein</topology>
    </subcellularLocation>
    <subcellularLocation>
        <location evidence="9">Cell projection</location>
        <location evidence="9">Dendritic spine membrane</location>
        <topology evidence="2">Multi-pass membrane protein</topology>
    </subcellularLocation>
    <subcellularLocation>
        <location evidence="9">Synaptic cell membrane</location>
        <topology>Multi-pass membrane protein</topology>
    </subcellularLocation>
    <subcellularLocation>
        <location evidence="10">Cell junction</location>
        <location evidence="10">Focal adhesion</location>
    </subcellularLocation>
    <text evidence="5 6 7 8">Cycles between recycling endosome and plasma membrane in response to diverse stimuli. Its internalization is clathrin- and beta-arrestin dependent and its plasma membrane insertion from the recycling endosomes requires phosphoinositide 3-kinase (PIK3CA) and SCAMP2.</text>
</comment>
<comment type="tissue specificity">
    <text evidence="9 12 13">Mainly expressed in brain (PubMed:7759094, PubMed:9933641). Expressed in neurons of the central and peripheral nervous system (PubMed:21551074, PubMed:9933641). Expressed also in testis, spleen, and skeletal muscle (PubMed:7759094).</text>
</comment>
<comment type="PTM">
    <text evidence="8 11">Phosphorylated by PRKAA2; promotes its accumulation at the cell surface (PubMed:24936055). Phosphorylated by CSNK2A1 in a manner favoring its beta-arrestin binding and endocytosis (PubMed:21296876).</text>
</comment>
<comment type="similarity">
    <text evidence="14">Belongs to the monovalent cation:proton antiporter 1 (CPA1) transporter (TC 2.A.36) family.</text>
</comment>
<feature type="chain" id="PRO_0000052360" description="Sodium/hydrogen exchanger 5">
    <location>
        <begin position="1"/>
        <end position="896"/>
    </location>
</feature>
<feature type="topological domain" description="Cytoplasmic" evidence="14">
    <location>
        <begin position="1"/>
        <end position="45"/>
    </location>
</feature>
<feature type="transmembrane region" description="Helical; Name=1" evidence="2">
    <location>
        <begin position="46"/>
        <end position="66"/>
    </location>
</feature>
<feature type="topological domain" description="Extracellular" evidence="14">
    <location>
        <begin position="67"/>
        <end position="73"/>
    </location>
</feature>
<feature type="transmembrane region" description="Helical; Name=2" evidence="2">
    <location>
        <begin position="74"/>
        <end position="94"/>
    </location>
</feature>
<feature type="topological domain" description="Cytoplasmic" evidence="14">
    <location>
        <begin position="95"/>
        <end position="103"/>
    </location>
</feature>
<feature type="transmembrane region" description="Helical; Name=3" evidence="2">
    <location>
        <begin position="104"/>
        <end position="124"/>
    </location>
</feature>
<feature type="topological domain" description="Extracellular" evidence="14">
    <location>
        <begin position="125"/>
        <end position="134"/>
    </location>
</feature>
<feature type="transmembrane region" description="Helical; Name=4" evidence="2">
    <location>
        <begin position="135"/>
        <end position="155"/>
    </location>
</feature>
<feature type="topological domain" description="Cytoplasmic" evidence="14">
    <location>
        <begin position="156"/>
        <end position="173"/>
    </location>
</feature>
<feature type="transmembrane region" description="Helical; Name=5" evidence="2">
    <location>
        <begin position="174"/>
        <end position="194"/>
    </location>
</feature>
<feature type="topological domain" description="Extracellular" evidence="14">
    <location>
        <begin position="195"/>
        <end position="200"/>
    </location>
</feature>
<feature type="transmembrane region" description="Helical; Name=6" evidence="2">
    <location>
        <begin position="201"/>
        <end position="221"/>
    </location>
</feature>
<feature type="topological domain" description="Cytoplasmic" evidence="14">
    <location>
        <begin position="222"/>
        <end position="246"/>
    </location>
</feature>
<feature type="transmembrane region" description="Helical; Name=7" evidence="2">
    <location>
        <begin position="247"/>
        <end position="267"/>
    </location>
</feature>
<feature type="topological domain" description="Extracellular" evidence="14">
    <location>
        <begin position="268"/>
        <end position="276"/>
    </location>
</feature>
<feature type="transmembrane region" description="Helical; Name=8" evidence="2">
    <location>
        <begin position="277"/>
        <end position="297"/>
    </location>
</feature>
<feature type="topological domain" description="Cytoplasmic" evidence="14">
    <location>
        <begin position="298"/>
        <end position="331"/>
    </location>
</feature>
<feature type="transmembrane region" description="Helical; Name=9" evidence="2">
    <location>
        <begin position="332"/>
        <end position="352"/>
    </location>
</feature>
<feature type="topological domain" description="Extracellular" evidence="14">
    <location>
        <begin position="353"/>
        <end position="360"/>
    </location>
</feature>
<feature type="transmembrane region" description="Helical; Name=10" evidence="2">
    <location>
        <begin position="361"/>
        <end position="381"/>
    </location>
</feature>
<feature type="topological domain" description="Cytoplasmic" evidence="14">
    <location>
        <begin position="382"/>
        <end position="398"/>
    </location>
</feature>
<feature type="transmembrane region" description="Helical; Name=11" evidence="2">
    <location>
        <begin position="399"/>
        <end position="419"/>
    </location>
</feature>
<feature type="topological domain" description="Extracellular" evidence="14">
    <location>
        <begin position="420"/>
        <end position="428"/>
    </location>
</feature>
<feature type="transmembrane region" description="Helical; Name=12" evidence="2">
    <location>
        <begin position="429"/>
        <end position="449"/>
    </location>
</feature>
<feature type="topological domain" description="Cytoplasmic" evidence="14">
    <location>
        <begin position="450"/>
        <end position="896"/>
    </location>
</feature>
<feature type="region of interest" description="Required for interaction with ARRB2" evidence="8">
    <location>
        <begin position="576"/>
        <end position="721"/>
    </location>
</feature>
<feature type="region of interest" description="Disordered" evidence="3">
    <location>
        <begin position="658"/>
        <end position="686"/>
    </location>
</feature>
<feature type="region of interest" description="Disordered" evidence="3">
    <location>
        <begin position="701"/>
        <end position="720"/>
    </location>
</feature>
<feature type="region of interest" description="Disordered" evidence="3">
    <location>
        <begin position="818"/>
        <end position="864"/>
    </location>
</feature>
<feature type="compositionally biased region" description="Basic residues" evidence="3">
    <location>
        <begin position="660"/>
        <end position="672"/>
    </location>
</feature>
<feature type="compositionally biased region" description="Polar residues" evidence="3">
    <location>
        <begin position="854"/>
        <end position="864"/>
    </location>
</feature>
<feature type="glycosylation site" description="N-linked (GlcNAc...) asparagine" evidence="2">
    <location>
        <position position="199"/>
    </location>
</feature>
<feature type="mutagenesis site" description="Does not disrupt the binding of ARRB2. Impaired endocytosis of SLC9A5." evidence="8">
    <original>IL</original>
    <variation>AA</variation>
    <location>
        <begin position="697"/>
        <end position="698"/>
    </location>
</feature>
<feature type="mutagenesis site" description="Abolishes SLC9A5 phosphorylation by CSNK2A1 and abolishes CSNK2A1-mediated binding of ARRB2; when associated with A-709; A-711; A-712 and A-714." evidence="8">
    <original>S</original>
    <variation>A</variation>
    <location>
        <position position="702"/>
    </location>
</feature>
<feature type="mutagenesis site" description="Abolishes SLC9A5 phosphorylation by CSNK2A1 and abolishes CSNK2A1-mediated binding of ARRB2; when associated with D-709; D-711; D-712 and D-714." evidence="8">
    <original>S</original>
    <variation>D</variation>
    <location>
        <position position="702"/>
    </location>
</feature>
<feature type="mutagenesis site" description="Abolishes SLC9A5 phosphorylation by CSNK2A1 and abolishes CSNK2A1-mediated binding of ARRB2; when associated with A-702; A-711; A-712 and A-714." evidence="8">
    <original>S</original>
    <variation>A</variation>
    <location>
        <position position="709"/>
    </location>
</feature>
<feature type="mutagenesis site" description="Abolishes SLC9A5 phosphorylation by CSNK2A1 and abolishes CSNK2A1-mediated binding of ARRB2; when associated with D-702; D-711; D-712 and D-714." evidence="8">
    <original>S</original>
    <variation>D</variation>
    <location>
        <position position="709"/>
    </location>
</feature>
<feature type="mutagenesis site" description="Abolishes SLC9A5 phosphorylation by CSNK2A1 and abolishes CSNK2A1-mediated binding of ARRB2; when associated with A-702; A-709; A-712 and A-714." evidence="8">
    <original>S</original>
    <variation>A</variation>
    <location>
        <position position="711"/>
    </location>
</feature>
<feature type="mutagenesis site" description="Abolishes SLC9A5 phosphorylation by CSNK2A1 and abolishes CSNK2A1-mediated binding of ARRB2; when associated with D-702; D-709; D-712 and D-714." evidence="8">
    <original>S</original>
    <variation>D</variation>
    <location>
        <position position="711"/>
    </location>
</feature>
<feature type="mutagenesis site" description="Abolishes SLC9A5 phosphorylation by CSNK2A1 and abolishes CSNK2A1-mediated binding of ARRB2; when associated with A-702; A-709; A-711 and A-714." evidence="8">
    <original>S</original>
    <variation>A</variation>
    <location>
        <position position="712"/>
    </location>
</feature>
<feature type="mutagenesis site" description="Abolishes SLC9A5 phosphorylation by CSNK2A1 and abolishes CSNK2A1-mediated binding of ARRB2; when associated with D-702; D-709; D-711 and D-714." evidence="8">
    <original>S</original>
    <variation>D</variation>
    <location>
        <position position="712"/>
    </location>
</feature>
<feature type="mutagenesis site" description="Abolishes SLC9A5 phosphorylation by CSNK2A1 and abolishes CSNK2A1-mediated binding of ARRB2; when associated with A-702; A-709; A-711 and A-712." evidence="8">
    <original>T</original>
    <variation>A</variation>
    <location>
        <position position="714"/>
    </location>
</feature>
<feature type="mutagenesis site" description="Abolishes SLC9A5 phosphorylation by CSNK2A1 and abolishes CSNK2A1-mediated binding of ARRB2; when associated with D-702; D-709; D-711 and D-712." evidence="8">
    <original>T</original>
    <variation>D</variation>
    <location>
        <position position="714"/>
    </location>
</feature>
<feature type="mutagenesis site" description="Does not disrupt the binding of ARRB2. Does not affect endocytosis of SLC9A5." evidence="8">
    <original>II</original>
    <variation>AA</variation>
    <location>
        <begin position="722"/>
        <end position="723"/>
    </location>
</feature>
<feature type="sequence conflict" description="In Ref. 4; AAA87678." evidence="14" ref="4">
    <original>L</original>
    <variation>V</variation>
    <location>
        <position position="202"/>
    </location>
</feature>
<evidence type="ECO:0000250" key="1">
    <source>
        <dbReference type="UniProtKB" id="Q9Z0X2"/>
    </source>
</evidence>
<evidence type="ECO:0000255" key="2"/>
<evidence type="ECO:0000256" key="3">
    <source>
        <dbReference type="SAM" id="MobiDB-lite"/>
    </source>
</evidence>
<evidence type="ECO:0000269" key="4">
    <source>
    </source>
</evidence>
<evidence type="ECO:0000269" key="5">
    <source>
    </source>
</evidence>
<evidence type="ECO:0000269" key="6">
    <source>
    </source>
</evidence>
<evidence type="ECO:0000269" key="7">
    <source>
    </source>
</evidence>
<evidence type="ECO:0000269" key="8">
    <source>
    </source>
</evidence>
<evidence type="ECO:0000269" key="9">
    <source>
    </source>
</evidence>
<evidence type="ECO:0000269" key="10">
    <source>
    </source>
</evidence>
<evidence type="ECO:0000269" key="11">
    <source>
    </source>
</evidence>
<evidence type="ECO:0000269" key="12">
    <source>
    </source>
</evidence>
<evidence type="ECO:0000269" key="13">
    <source>
    </source>
</evidence>
<evidence type="ECO:0000305" key="14"/>
<evidence type="ECO:0000305" key="15">
    <source>
    </source>
</evidence>
<evidence type="ECO:0000312" key="16">
    <source>
        <dbReference type="HGNC" id="HGNC:11078"/>
    </source>
</evidence>
<gene>
    <name evidence="16" type="primary">SLC9A5</name>
    <name type="synonym">NHE5</name>
</gene>
<sequence>MLRAALSLLALPLAGAAEEPTQKPESPGEPPPGLELFRWQWHEVEAPYLVALWILVASLAKIVFHLSRKVTSLVPESCLLILLGLVLGGIVLAVAKKAEYQLEPGTFFLFLLPPIVLDSGYFMPSRLFFDNLGAILTYAVVGTLWNAFTTGAALWGLQQAGLVAPRVQAGLLDFLLFGSLISAVDPVAVLAVFEEVHVNETLFIIVFGESLLNDAVTVVLYKVCNSFVEMGSANVQATDYLKGVASLFVVSLGGAAVGLVFAFLLALTTRFTKRVRIIEPLLVFLLAYAAYLTAEMASLSAILAVTMCGLGCKKYVEANISHKSRTTVKYTMKTLASCAETVIFMLLGISAVDSSKWAWDSGLVLGTLIFILFFRALGVVLQTWVLNQFRLVPLDKIDQVVMSYGGLRGAVAFALVILLDRTKVPAKDYFVATTIVVVFFTVIVQGLTIKPLVKWLKVKRSEHHKPTLNQELHEHTFDHILAAVEDVVGHHGYHYWRDRWEQFDKKYLSQLLMRRSAYRIRDQIWDVYYRLNIRDAISFVDQGGHVLSSTGLTLPSMPSRNSVAETSVTNLLRESGSGACLDLQVIDTVRSGRDREDAVMHHLLCGGLYKPRRRYKASCSRHFISEDAQERQDKEVFQQNMKRRLESFKSTKHNICFTKSKPRPRKTGRRKKDGVANAEATNGKHRGLGFQDTAAVILTVESEEEEEESDSSETEKEDDEGIIFVARATSEVLQEGKVSGSLEVCPSPRIIPPSPTCAEKELPWKSGQGDLAVYVSSETTKIVPVDMQTGWNQSISSLESLASPPCNQAPILTCLPPHPRGTEEPQVPLHLPSDPRSSFAFPPSLAKAGRSRSESSADLPQQQELQPLMGHKDHTHLSPGTATSHWCIQFNRGSRL</sequence>
<name>SL9A5_HUMAN</name>
<dbReference type="EMBL" id="AF111173">
    <property type="protein sequence ID" value="AAC98696.1"/>
    <property type="molecule type" value="mRNA"/>
</dbReference>
<dbReference type="EMBL" id="CH471092">
    <property type="protein sequence ID" value="EAW83114.1"/>
    <property type="molecule type" value="Genomic_DNA"/>
</dbReference>
<dbReference type="EMBL" id="BC142671">
    <property type="protein sequence ID" value="AAI42672.1"/>
    <property type="molecule type" value="mRNA"/>
</dbReference>
<dbReference type="EMBL" id="U08607">
    <property type="protein sequence ID" value="AAA87678.1"/>
    <property type="molecule type" value="Genomic_DNA"/>
</dbReference>
<dbReference type="CCDS" id="CCDS42178.1"/>
<dbReference type="RefSeq" id="NP_004585.1">
    <property type="nucleotide sequence ID" value="NM_004594.3"/>
</dbReference>
<dbReference type="SMR" id="Q14940"/>
<dbReference type="BioGRID" id="112442">
    <property type="interactions" value="22"/>
</dbReference>
<dbReference type="FunCoup" id="Q14940">
    <property type="interactions" value="87"/>
</dbReference>
<dbReference type="IntAct" id="Q14940">
    <property type="interactions" value="17"/>
</dbReference>
<dbReference type="STRING" id="9606.ENSP00000299798"/>
<dbReference type="BindingDB" id="Q14940"/>
<dbReference type="ChEMBL" id="CHEMBL3058"/>
<dbReference type="DrugCentral" id="Q14940"/>
<dbReference type="GuidetoPHARMACOLOGY" id="952"/>
<dbReference type="TCDB" id="2.A.36.1.16">
    <property type="family name" value="the monovalent cation:proton antiporter-1 (cpa1) family"/>
</dbReference>
<dbReference type="GlyCosmos" id="Q14940">
    <property type="glycosylation" value="2 sites, No reported glycans"/>
</dbReference>
<dbReference type="GlyGen" id="Q14940">
    <property type="glycosylation" value="2 sites"/>
</dbReference>
<dbReference type="iPTMnet" id="Q14940"/>
<dbReference type="PhosphoSitePlus" id="Q14940"/>
<dbReference type="BioMuta" id="SLC9A5"/>
<dbReference type="DMDM" id="12644417"/>
<dbReference type="jPOST" id="Q14940"/>
<dbReference type="MassIVE" id="Q14940"/>
<dbReference type="PaxDb" id="9606-ENSP00000299798"/>
<dbReference type="PeptideAtlas" id="Q14940"/>
<dbReference type="ProteomicsDB" id="60252"/>
<dbReference type="Antibodypedia" id="44267">
    <property type="antibodies" value="65 antibodies from 20 providers"/>
</dbReference>
<dbReference type="DNASU" id="6553"/>
<dbReference type="Ensembl" id="ENST00000299798.16">
    <property type="protein sequence ID" value="ENSP00000299798.11"/>
    <property type="gene ID" value="ENSG00000135740.17"/>
</dbReference>
<dbReference type="GeneID" id="6553"/>
<dbReference type="KEGG" id="hsa:6553"/>
<dbReference type="MANE-Select" id="ENST00000299798.16">
    <property type="protein sequence ID" value="ENSP00000299798.11"/>
    <property type="RefSeq nucleotide sequence ID" value="NM_004594.3"/>
    <property type="RefSeq protein sequence ID" value="NP_004585.1"/>
</dbReference>
<dbReference type="UCSC" id="uc002esm.4">
    <property type="organism name" value="human"/>
</dbReference>
<dbReference type="AGR" id="HGNC:11078"/>
<dbReference type="CTD" id="6553"/>
<dbReference type="DisGeNET" id="6553"/>
<dbReference type="GeneCards" id="SLC9A5"/>
<dbReference type="HGNC" id="HGNC:11078">
    <property type="gene designation" value="SLC9A5"/>
</dbReference>
<dbReference type="HPA" id="ENSG00000135740">
    <property type="expression patterns" value="Group enriched (brain, lymphoid tissue)"/>
</dbReference>
<dbReference type="MIM" id="600477">
    <property type="type" value="gene"/>
</dbReference>
<dbReference type="neXtProt" id="NX_Q14940"/>
<dbReference type="OpenTargets" id="ENSG00000135740"/>
<dbReference type="PharmGKB" id="PA35934"/>
<dbReference type="VEuPathDB" id="HostDB:ENSG00000135740"/>
<dbReference type="eggNOG" id="KOG1966">
    <property type="taxonomic scope" value="Eukaryota"/>
</dbReference>
<dbReference type="GeneTree" id="ENSGT00940000159190"/>
<dbReference type="HOGENOM" id="CLU_005912_4_2_1"/>
<dbReference type="InParanoid" id="Q14940"/>
<dbReference type="OMA" id="AMHHLLC"/>
<dbReference type="OrthoDB" id="196264at2759"/>
<dbReference type="PAN-GO" id="Q14940">
    <property type="GO annotations" value="6 GO annotations based on evolutionary models"/>
</dbReference>
<dbReference type="PhylomeDB" id="Q14940"/>
<dbReference type="TreeFam" id="TF317212"/>
<dbReference type="PathwayCommons" id="Q14940"/>
<dbReference type="Reactome" id="R-HSA-425986">
    <property type="pathway name" value="Sodium/Proton exchangers"/>
</dbReference>
<dbReference type="SignaLink" id="Q14940"/>
<dbReference type="SIGNOR" id="Q14940"/>
<dbReference type="BioGRID-ORCS" id="6553">
    <property type="hits" value="7 hits in 1154 CRISPR screens"/>
</dbReference>
<dbReference type="GeneWiki" id="SLC9A5"/>
<dbReference type="GenomeRNAi" id="6553"/>
<dbReference type="Pharos" id="Q14940">
    <property type="development level" value="Tchem"/>
</dbReference>
<dbReference type="PRO" id="PR:Q14940"/>
<dbReference type="Proteomes" id="UP000005640">
    <property type="component" value="Chromosome 16"/>
</dbReference>
<dbReference type="RNAct" id="Q14940">
    <property type="molecule type" value="protein"/>
</dbReference>
<dbReference type="Bgee" id="ENSG00000135740">
    <property type="expression patterns" value="Expressed in right hemisphere of cerebellum and 107 other cell types or tissues"/>
</dbReference>
<dbReference type="ExpressionAtlas" id="Q14940">
    <property type="expression patterns" value="baseline and differential"/>
</dbReference>
<dbReference type="GO" id="GO:0032591">
    <property type="term" value="C:dendritic spine membrane"/>
    <property type="evidence" value="ECO:0007669"/>
    <property type="project" value="UniProtKB-SubCell"/>
</dbReference>
<dbReference type="GO" id="GO:0005925">
    <property type="term" value="C:focal adhesion"/>
    <property type="evidence" value="ECO:0000314"/>
    <property type="project" value="UniProtKB"/>
</dbReference>
<dbReference type="GO" id="GO:0016020">
    <property type="term" value="C:membrane"/>
    <property type="evidence" value="ECO:0000304"/>
    <property type="project" value="ProtInc"/>
</dbReference>
<dbReference type="GO" id="GO:0044309">
    <property type="term" value="C:neuron spine"/>
    <property type="evidence" value="ECO:0000314"/>
    <property type="project" value="UniProtKB"/>
</dbReference>
<dbReference type="GO" id="GO:0005886">
    <property type="term" value="C:plasma membrane"/>
    <property type="evidence" value="ECO:0000314"/>
    <property type="project" value="UniProtKB"/>
</dbReference>
<dbReference type="GO" id="GO:0045211">
    <property type="term" value="C:postsynaptic membrane"/>
    <property type="evidence" value="ECO:0007669"/>
    <property type="project" value="UniProtKB-KW"/>
</dbReference>
<dbReference type="GO" id="GO:0055038">
    <property type="term" value="C:recycling endosome membrane"/>
    <property type="evidence" value="ECO:0000314"/>
    <property type="project" value="UniProtKB"/>
</dbReference>
<dbReference type="GO" id="GO:0045202">
    <property type="term" value="C:synapse"/>
    <property type="evidence" value="ECO:0000314"/>
    <property type="project" value="UniProtKB"/>
</dbReference>
<dbReference type="GO" id="GO:1990763">
    <property type="term" value="F:arrestin family protein binding"/>
    <property type="evidence" value="ECO:0000314"/>
    <property type="project" value="UniProtKB"/>
</dbReference>
<dbReference type="GO" id="GO:0015386">
    <property type="term" value="F:potassium:proton antiporter activity"/>
    <property type="evidence" value="ECO:0000318"/>
    <property type="project" value="GO_Central"/>
</dbReference>
<dbReference type="GO" id="GO:0015385">
    <property type="term" value="F:sodium:proton antiporter activity"/>
    <property type="evidence" value="ECO:0000314"/>
    <property type="project" value="UniProtKB"/>
</dbReference>
<dbReference type="GO" id="GO:0006811">
    <property type="term" value="P:monoatomic ion transport"/>
    <property type="evidence" value="ECO:0000304"/>
    <property type="project" value="Reactome"/>
</dbReference>
<dbReference type="GO" id="GO:0071805">
    <property type="term" value="P:potassium ion transmembrane transport"/>
    <property type="evidence" value="ECO:0000318"/>
    <property type="project" value="GO_Central"/>
</dbReference>
<dbReference type="GO" id="GO:0051453">
    <property type="term" value="P:regulation of intracellular pH"/>
    <property type="evidence" value="ECO:0000314"/>
    <property type="project" value="UniProtKB"/>
</dbReference>
<dbReference type="GO" id="GO:0098719">
    <property type="term" value="P:sodium ion import across plasma membrane"/>
    <property type="evidence" value="ECO:0000318"/>
    <property type="project" value="GO_Central"/>
</dbReference>
<dbReference type="GO" id="GO:0035725">
    <property type="term" value="P:sodium ion transmembrane transport"/>
    <property type="evidence" value="ECO:0000314"/>
    <property type="project" value="UniProtKB"/>
</dbReference>
<dbReference type="Gene3D" id="6.10.140.1330">
    <property type="match status" value="1"/>
</dbReference>
<dbReference type="InterPro" id="IPR018422">
    <property type="entry name" value="Cation/H_exchanger_CPA1"/>
</dbReference>
<dbReference type="InterPro" id="IPR006153">
    <property type="entry name" value="Cation/H_exchanger_TM"/>
</dbReference>
<dbReference type="InterPro" id="IPR018410">
    <property type="entry name" value="Na/H_exchanger_3/5"/>
</dbReference>
<dbReference type="InterPro" id="IPR004709">
    <property type="entry name" value="NaH_exchanger"/>
</dbReference>
<dbReference type="NCBIfam" id="TIGR00840">
    <property type="entry name" value="b_cpa1"/>
    <property type="match status" value="1"/>
</dbReference>
<dbReference type="PANTHER" id="PTHR10110">
    <property type="entry name" value="SODIUM/HYDROGEN EXCHANGER"/>
    <property type="match status" value="1"/>
</dbReference>
<dbReference type="PANTHER" id="PTHR10110:SF56">
    <property type="entry name" value="SODIUM_HYDROGEN EXCHANGER 5"/>
    <property type="match status" value="1"/>
</dbReference>
<dbReference type="Pfam" id="PF00999">
    <property type="entry name" value="Na_H_Exchanger"/>
    <property type="match status" value="1"/>
</dbReference>
<dbReference type="PRINTS" id="PR01084">
    <property type="entry name" value="NAHEXCHNGR"/>
</dbReference>
<dbReference type="PRINTS" id="PR01087">
    <property type="entry name" value="NAHEXCHNGR3"/>
</dbReference>
<organism>
    <name type="scientific">Homo sapiens</name>
    <name type="common">Human</name>
    <dbReference type="NCBI Taxonomy" id="9606"/>
    <lineage>
        <taxon>Eukaryota</taxon>
        <taxon>Metazoa</taxon>
        <taxon>Chordata</taxon>
        <taxon>Craniata</taxon>
        <taxon>Vertebrata</taxon>
        <taxon>Euteleostomi</taxon>
        <taxon>Mammalia</taxon>
        <taxon>Eutheria</taxon>
        <taxon>Euarchontoglires</taxon>
        <taxon>Primates</taxon>
        <taxon>Haplorrhini</taxon>
        <taxon>Catarrhini</taxon>
        <taxon>Hominidae</taxon>
        <taxon>Homo</taxon>
    </lineage>
</organism>
<proteinExistence type="evidence at protein level"/>
<keyword id="KW-0050">Antiport</keyword>
<keyword id="KW-0965">Cell junction</keyword>
<keyword id="KW-1003">Cell membrane</keyword>
<keyword id="KW-0966">Cell projection</keyword>
<keyword id="KW-0967">Endosome</keyword>
<keyword id="KW-0325">Glycoprotein</keyword>
<keyword id="KW-0406">Ion transport</keyword>
<keyword id="KW-0472">Membrane</keyword>
<keyword id="KW-0597">Phosphoprotein</keyword>
<keyword id="KW-0628">Postsynaptic cell membrane</keyword>
<keyword id="KW-1267">Proteomics identification</keyword>
<keyword id="KW-1185">Reference proteome</keyword>
<keyword id="KW-0915">Sodium</keyword>
<keyword id="KW-0739">Sodium transport</keyword>
<keyword id="KW-0770">Synapse</keyword>
<keyword id="KW-0812">Transmembrane</keyword>
<keyword id="KW-1133">Transmembrane helix</keyword>
<keyword id="KW-0813">Transport</keyword>